<evidence type="ECO:0000250" key="1"/>
<evidence type="ECO:0000255" key="2">
    <source>
        <dbReference type="PROSITE-ProRule" id="PRU00813"/>
    </source>
</evidence>
<evidence type="ECO:0000255" key="3">
    <source>
        <dbReference type="PROSITE-ProRule" id="PRU00814"/>
    </source>
</evidence>
<evidence type="ECO:0000256" key="4">
    <source>
        <dbReference type="SAM" id="MobiDB-lite"/>
    </source>
</evidence>
<evidence type="ECO:0000305" key="5"/>
<keyword id="KW-0067">ATP-binding</keyword>
<keyword id="KW-0418">Kinase</keyword>
<keyword id="KW-0547">Nucleotide-binding</keyword>
<keyword id="KW-1185">Reference proteome</keyword>
<keyword id="KW-0808">Transferase</keyword>
<accession>O04059</accession>
<sequence>MDFQSKKLINDPNDVVTEFIEGLIENYPGLQYLDGFPEVKVVLRADVSGAKYDKVAIISGGGSGHEPAHAGFVGEGMLTAAICGDVFASPNVDSILAGIRAVTGPMGCLLIVKNYTGDRLNFGLAAEQAKSEGYKVEMVIVGDDCALPPPRGIAGRRGLAGTLLVHKVAGAAAACGLPLADVAAEAKRASEMVGTMGVALSVCTSPGQVTSDRLGPGKMELGLGIHGEPGAAVADLQPVDVVVSHVLKEILSPETNYVPITRGSRVVLLINGLGATPLMELMIIAGKAVPELQLEHGLAVDRVYTGSFMTSLDMAGFSISVMKADQAILDRLDAPTKAPNWPVGAEGNRPPAKIPVPLPPSHSIKIEKTLSRPEKLSPQGHILETAIEAAATEVVNLRDNLNEWDNKVGDGDCGSTMFRGAVAILEDMKKYYPLNDPAETVNEIGASIGRVMGGTSGILYSIFCKAAYAKLKENAESVVTAIHWADALEAAIAAVSKYGGASAGYRTLLDALIPALSALKERLNAGDDPADAFIISAEAASAGAESTKHMQAQAGRSTYVPGDILASVPDPGAMAAAAWYRAAALAVKEKYNTA</sequence>
<reference key="1">
    <citation type="submission" date="1997-04" db="EMBL/GenBank/DDBJ databases">
        <title>L. esculentum mRNA for 3,4 -dihydroxy-2-butanone kinase.</title>
        <authorList>
            <person name="Herz S."/>
            <person name="Eberhardt S."/>
            <person name="Bacher A."/>
        </authorList>
    </citation>
    <scope>NUCLEOTIDE SEQUENCE [MRNA]</scope>
    <source>
        <strain>cv. UC82B</strain>
    </source>
</reference>
<name>DHBK_SOLLC</name>
<organism>
    <name type="scientific">Solanum lycopersicum</name>
    <name type="common">Tomato</name>
    <name type="synonym">Lycopersicon esculentum</name>
    <dbReference type="NCBI Taxonomy" id="4081"/>
    <lineage>
        <taxon>Eukaryota</taxon>
        <taxon>Viridiplantae</taxon>
        <taxon>Streptophyta</taxon>
        <taxon>Embryophyta</taxon>
        <taxon>Tracheophyta</taxon>
        <taxon>Spermatophyta</taxon>
        <taxon>Magnoliopsida</taxon>
        <taxon>eudicotyledons</taxon>
        <taxon>Gunneridae</taxon>
        <taxon>Pentapetalae</taxon>
        <taxon>asterids</taxon>
        <taxon>lamiids</taxon>
        <taxon>Solanales</taxon>
        <taxon>Solanaceae</taxon>
        <taxon>Solanoideae</taxon>
        <taxon>Solaneae</taxon>
        <taxon>Solanum</taxon>
        <taxon>Solanum subgen. Lycopersicon</taxon>
    </lineage>
</organism>
<comment type="similarity">
    <text evidence="5">Belongs to the dihydroxyacetone kinase (DAK) family.</text>
</comment>
<proteinExistence type="evidence at transcript level"/>
<dbReference type="EC" id="2.7.1.-"/>
<dbReference type="EMBL" id="Y12090">
    <property type="protein sequence ID" value="CAA72805.1"/>
    <property type="molecule type" value="mRNA"/>
</dbReference>
<dbReference type="PIR" id="T06369">
    <property type="entry name" value="T06369"/>
</dbReference>
<dbReference type="RefSeq" id="NP_001234326.2">
    <property type="nucleotide sequence ID" value="NM_001247397.2"/>
</dbReference>
<dbReference type="SMR" id="O04059"/>
<dbReference type="FunCoup" id="O04059">
    <property type="interactions" value="2093"/>
</dbReference>
<dbReference type="STRING" id="4081.O04059"/>
<dbReference type="PaxDb" id="4081-Solyc06g072380.2.1"/>
<dbReference type="GeneID" id="544126"/>
<dbReference type="KEGG" id="sly:544126"/>
<dbReference type="eggNOG" id="KOG2426">
    <property type="taxonomic scope" value="Eukaryota"/>
</dbReference>
<dbReference type="InParanoid" id="O04059"/>
<dbReference type="OrthoDB" id="1724672at2759"/>
<dbReference type="Proteomes" id="UP000004994">
    <property type="component" value="Unplaced"/>
</dbReference>
<dbReference type="ExpressionAtlas" id="O04059">
    <property type="expression patterns" value="baseline and differential"/>
</dbReference>
<dbReference type="GO" id="GO:0005829">
    <property type="term" value="C:cytosol"/>
    <property type="evidence" value="ECO:0000318"/>
    <property type="project" value="GO_Central"/>
</dbReference>
<dbReference type="GO" id="GO:0005524">
    <property type="term" value="F:ATP binding"/>
    <property type="evidence" value="ECO:0007669"/>
    <property type="project" value="UniProtKB-KW"/>
</dbReference>
<dbReference type="GO" id="GO:0004371">
    <property type="term" value="F:glycerone kinase activity"/>
    <property type="evidence" value="ECO:0000318"/>
    <property type="project" value="GO_Central"/>
</dbReference>
<dbReference type="GO" id="GO:0019563">
    <property type="term" value="P:glycerol catabolic process"/>
    <property type="evidence" value="ECO:0000318"/>
    <property type="project" value="GO_Central"/>
</dbReference>
<dbReference type="FunFam" id="3.30.1180.20:FF:000001">
    <property type="entry name" value="Dihydroxyacetone kinase 1"/>
    <property type="match status" value="1"/>
</dbReference>
<dbReference type="FunFam" id="3.40.50.10440:FF:000001">
    <property type="entry name" value="Dihydroxyacetone kinase, DhaK subunit"/>
    <property type="match status" value="1"/>
</dbReference>
<dbReference type="FunFam" id="1.25.40.340:FF:000002">
    <property type="entry name" value="Dihydroxyacetone kinase, L subunit"/>
    <property type="match status" value="1"/>
</dbReference>
<dbReference type="Gene3D" id="1.25.40.340">
    <property type="match status" value="1"/>
</dbReference>
<dbReference type="Gene3D" id="3.40.50.10440">
    <property type="entry name" value="Dihydroxyacetone kinase, domain 1"/>
    <property type="match status" value="1"/>
</dbReference>
<dbReference type="Gene3D" id="3.30.1180.20">
    <property type="entry name" value="Dihydroxyacetone kinase, domain 2"/>
    <property type="match status" value="1"/>
</dbReference>
<dbReference type="InterPro" id="IPR012734">
    <property type="entry name" value="DhaK_ATP"/>
</dbReference>
<dbReference type="InterPro" id="IPR004006">
    <property type="entry name" value="DhaK_dom"/>
</dbReference>
<dbReference type="InterPro" id="IPR004007">
    <property type="entry name" value="DhaL_dom"/>
</dbReference>
<dbReference type="InterPro" id="IPR036117">
    <property type="entry name" value="DhaL_dom_sf"/>
</dbReference>
<dbReference type="InterPro" id="IPR050861">
    <property type="entry name" value="Dihydroxyacetone_Kinase"/>
</dbReference>
<dbReference type="NCBIfam" id="TIGR02361">
    <property type="entry name" value="dak_ATP"/>
    <property type="match status" value="1"/>
</dbReference>
<dbReference type="NCBIfam" id="NF011049">
    <property type="entry name" value="PRK14479.1"/>
    <property type="match status" value="1"/>
</dbReference>
<dbReference type="PANTHER" id="PTHR28629">
    <property type="entry name" value="TRIOKINASE/FMN CYCLASE"/>
    <property type="match status" value="1"/>
</dbReference>
<dbReference type="PANTHER" id="PTHR28629:SF4">
    <property type="entry name" value="TRIOKINASE_FMN CYCLASE"/>
    <property type="match status" value="1"/>
</dbReference>
<dbReference type="Pfam" id="PF02733">
    <property type="entry name" value="Dak1"/>
    <property type="match status" value="1"/>
</dbReference>
<dbReference type="Pfam" id="PF02734">
    <property type="entry name" value="Dak2"/>
    <property type="match status" value="1"/>
</dbReference>
<dbReference type="SMART" id="SM01120">
    <property type="entry name" value="Dak2"/>
    <property type="match status" value="1"/>
</dbReference>
<dbReference type="SUPFAM" id="SSF82549">
    <property type="entry name" value="DAK1/DegV-like"/>
    <property type="match status" value="1"/>
</dbReference>
<dbReference type="SUPFAM" id="SSF101473">
    <property type="entry name" value="DhaL-like"/>
    <property type="match status" value="1"/>
</dbReference>
<dbReference type="PROSITE" id="PS51481">
    <property type="entry name" value="DHAK"/>
    <property type="match status" value="1"/>
</dbReference>
<dbReference type="PROSITE" id="PS51480">
    <property type="entry name" value="DHAL"/>
    <property type="match status" value="1"/>
</dbReference>
<feature type="chain" id="PRO_0000121531" description="Putative 3,4-dihydroxy-2-butanone kinase">
    <location>
        <begin position="1"/>
        <end position="594"/>
    </location>
</feature>
<feature type="domain" description="DhaK" evidence="3">
    <location>
        <begin position="11"/>
        <end position="341"/>
    </location>
</feature>
<feature type="domain" description="DhaL" evidence="2">
    <location>
        <begin position="381"/>
        <end position="585"/>
    </location>
</feature>
<feature type="region of interest" description="Disordered" evidence="4">
    <location>
        <begin position="339"/>
        <end position="358"/>
    </location>
</feature>
<feature type="active site" description="Tele-hemiaminal-histidine intermediate" evidence="3">
    <location>
        <position position="226"/>
    </location>
</feature>
<feature type="binding site" evidence="1">
    <location>
        <begin position="62"/>
        <end position="65"/>
    </location>
    <ligand>
        <name>substrate</name>
    </ligand>
</feature>
<feature type="binding site" evidence="1">
    <location>
        <position position="113"/>
    </location>
    <ligand>
        <name>substrate</name>
    </ligand>
</feature>
<feature type="binding site" evidence="1">
    <location>
        <position position="118"/>
    </location>
    <ligand>
        <name>substrate</name>
    </ligand>
</feature>
<feature type="binding site" evidence="1">
    <location>
        <begin position="410"/>
        <end position="413"/>
    </location>
    <ligand>
        <name>ATP</name>
        <dbReference type="ChEBI" id="CHEBI:30616"/>
    </ligand>
</feature>
<feature type="binding site" evidence="1">
    <location>
        <begin position="455"/>
        <end position="456"/>
    </location>
    <ligand>
        <name>ATP</name>
        <dbReference type="ChEBI" id="CHEBI:30616"/>
    </ligand>
</feature>
<feature type="binding site" evidence="1">
    <location>
        <position position="499"/>
    </location>
    <ligand>
        <name>ATP</name>
        <dbReference type="ChEBI" id="CHEBI:30616"/>
    </ligand>
</feature>
<feature type="binding site" evidence="1">
    <location>
        <begin position="507"/>
        <end position="508"/>
    </location>
    <ligand>
        <name>ATP</name>
        <dbReference type="ChEBI" id="CHEBI:30616"/>
    </ligand>
</feature>
<feature type="binding site" evidence="1">
    <location>
        <begin position="570"/>
        <end position="572"/>
    </location>
    <ligand>
        <name>ATP</name>
        <dbReference type="ChEBI" id="CHEBI:30616"/>
    </ligand>
</feature>
<gene>
    <name type="primary">DHBK</name>
</gene>
<protein>
    <recommendedName>
        <fullName>Putative 3,4-dihydroxy-2-butanone kinase</fullName>
        <ecNumber>2.7.1.-</ecNumber>
    </recommendedName>
</protein>